<organism>
    <name type="scientific">Saccharomyces cerevisiae</name>
    <name type="common">Baker's yeast</name>
    <dbReference type="NCBI Taxonomy" id="4932"/>
    <lineage>
        <taxon>Eukaryota</taxon>
        <taxon>Fungi</taxon>
        <taxon>Dikarya</taxon>
        <taxon>Ascomycota</taxon>
        <taxon>Saccharomycotina</taxon>
        <taxon>Saccharomycetes</taxon>
        <taxon>Saccharomycetales</taxon>
        <taxon>Saccharomycetaceae</taxon>
        <taxon>Saccharomyces</taxon>
    </lineage>
</organism>
<reference key="1">
    <citation type="journal article" date="1991" name="FEBS Lett.">
        <title>Extended N-terminal sequencing of proteins of the large ribosomal subunit from yeast mitochondria.</title>
        <authorList>
            <person name="Grohmann L."/>
            <person name="Graack H.-R."/>
            <person name="Kruft V."/>
            <person name="Choli T."/>
            <person name="Goldschmidt-Reisin S."/>
            <person name="Kitakawa M."/>
        </authorList>
    </citation>
    <scope>PROTEIN SEQUENCE</scope>
    <scope>SUBCELLULAR LOCATION</scope>
    <source>
        <strain>07173</strain>
    </source>
</reference>
<sequence length="15" mass="1852">WXDGYFVEVIVRFNP</sequence>
<accession>P36522</accession>
<evidence type="ECO:0000269" key="1">
    <source>
    </source>
</evidence>
<evidence type="ECO:0000303" key="2">
    <source>
    </source>
</evidence>
<proteinExistence type="evidence at protein level"/>
<feature type="chain" id="PRO_0000087689" description="Putative large ribosomal subunit protein YmL12">
    <location>
        <begin position="1"/>
        <end position="15" status="greater than"/>
    </location>
</feature>
<feature type="non-terminal residue">
    <location>
        <position position="15"/>
    </location>
</feature>
<keyword id="KW-0903">Direct protein sequencing</keyword>
<keyword id="KW-0496">Mitochondrion</keyword>
<keyword id="KW-0687">Ribonucleoprotein</keyword>
<keyword id="KW-0689">Ribosomal protein</keyword>
<comment type="function">
    <text>Putative component of the large subunit of mitochondrial ribosome.</text>
</comment>
<comment type="subcellular location">
    <subcellularLocation>
        <location evidence="1">Mitochondrion</location>
    </subcellularLocation>
</comment>
<dbReference type="SGD" id="S000029307">
    <property type="gene designation" value="MRPL12"/>
</dbReference>
<dbReference type="GO" id="GO:0005739">
    <property type="term" value="C:mitochondrion"/>
    <property type="evidence" value="ECO:0007669"/>
    <property type="project" value="UniProtKB-SubCell"/>
</dbReference>
<dbReference type="GO" id="GO:1990904">
    <property type="term" value="C:ribonucleoprotein complex"/>
    <property type="evidence" value="ECO:0007669"/>
    <property type="project" value="UniProtKB-KW"/>
</dbReference>
<dbReference type="GO" id="GO:0005840">
    <property type="term" value="C:ribosome"/>
    <property type="evidence" value="ECO:0007669"/>
    <property type="project" value="UniProtKB-KW"/>
</dbReference>
<protein>
    <recommendedName>
        <fullName evidence="2">Putative large ribosomal subunit protein YmL12</fullName>
    </recommendedName>
    <alternativeName>
        <fullName>54S ribosomal protein L12, mitochondrial</fullName>
    </alternativeName>
</protein>
<name>RM12_YEASX</name>